<evidence type="ECO:0000255" key="1"/>
<evidence type="ECO:0000305" key="2"/>
<feature type="chain" id="PRO_0000210382" description="Putative L-lactate permease">
    <location>
        <begin position="1"/>
        <end position="532"/>
    </location>
</feature>
<feature type="transmembrane region" description="Helical" evidence="1">
    <location>
        <begin position="23"/>
        <end position="43"/>
    </location>
</feature>
<feature type="transmembrane region" description="Helical" evidence="1">
    <location>
        <begin position="56"/>
        <end position="76"/>
    </location>
</feature>
<feature type="transmembrane region" description="Helical" evidence="1">
    <location>
        <begin position="101"/>
        <end position="121"/>
    </location>
</feature>
<feature type="transmembrane region" description="Helical" evidence="1">
    <location>
        <begin position="129"/>
        <end position="149"/>
    </location>
</feature>
<feature type="transmembrane region" description="Helical" evidence="1">
    <location>
        <begin position="152"/>
        <end position="172"/>
    </location>
</feature>
<feature type="transmembrane region" description="Helical" evidence="1">
    <location>
        <begin position="180"/>
        <end position="200"/>
    </location>
</feature>
<feature type="transmembrane region" description="Helical" evidence="1">
    <location>
        <begin position="213"/>
        <end position="233"/>
    </location>
</feature>
<feature type="transmembrane region" description="Helical" evidence="1">
    <location>
        <begin position="234"/>
        <end position="254"/>
    </location>
</feature>
<feature type="transmembrane region" description="Helical" evidence="1">
    <location>
        <begin position="274"/>
        <end position="294"/>
    </location>
</feature>
<feature type="transmembrane region" description="Helical" evidence="1">
    <location>
        <begin position="346"/>
        <end position="366"/>
    </location>
</feature>
<feature type="transmembrane region" description="Helical" evidence="1">
    <location>
        <begin position="387"/>
        <end position="407"/>
    </location>
</feature>
<feature type="transmembrane region" description="Helical" evidence="1">
    <location>
        <begin position="420"/>
        <end position="440"/>
    </location>
</feature>
<feature type="transmembrane region" description="Helical" evidence="1">
    <location>
        <begin position="462"/>
        <end position="482"/>
    </location>
</feature>
<feature type="transmembrane region" description="Helical" evidence="1">
    <location>
        <begin position="508"/>
        <end position="528"/>
    </location>
</feature>
<gene>
    <name type="ordered locus">HI_1218</name>
</gene>
<comment type="function">
    <text>May play a role in L-lactate transport.</text>
</comment>
<comment type="subcellular location">
    <subcellularLocation>
        <location evidence="2">Cell inner membrane</location>
        <topology evidence="2">Multi-pass membrane protein</topology>
    </subcellularLocation>
</comment>
<comment type="similarity">
    <text evidence="2">Belongs to the lactate permease family.</text>
</comment>
<keyword id="KW-0997">Cell inner membrane</keyword>
<keyword id="KW-1003">Cell membrane</keyword>
<keyword id="KW-0472">Membrane</keyword>
<keyword id="KW-1185">Reference proteome</keyword>
<keyword id="KW-0812">Transmembrane</keyword>
<keyword id="KW-1133">Transmembrane helix</keyword>
<keyword id="KW-0813">Transport</keyword>
<organism>
    <name type="scientific">Haemophilus influenzae (strain ATCC 51907 / DSM 11121 / KW20 / Rd)</name>
    <dbReference type="NCBI Taxonomy" id="71421"/>
    <lineage>
        <taxon>Bacteria</taxon>
        <taxon>Pseudomonadati</taxon>
        <taxon>Pseudomonadota</taxon>
        <taxon>Gammaproteobacteria</taxon>
        <taxon>Pasteurellales</taxon>
        <taxon>Pasteurellaceae</taxon>
        <taxon>Haemophilus</taxon>
    </lineage>
</organism>
<reference key="1">
    <citation type="journal article" date="1995" name="Science">
        <title>Whole-genome random sequencing and assembly of Haemophilus influenzae Rd.</title>
        <authorList>
            <person name="Fleischmann R.D."/>
            <person name="Adams M.D."/>
            <person name="White O."/>
            <person name="Clayton R.A."/>
            <person name="Kirkness E.F."/>
            <person name="Kerlavage A.R."/>
            <person name="Bult C.J."/>
            <person name="Tomb J.-F."/>
            <person name="Dougherty B.A."/>
            <person name="Merrick J.M."/>
            <person name="McKenney K."/>
            <person name="Sutton G.G."/>
            <person name="FitzHugh W."/>
            <person name="Fields C.A."/>
            <person name="Gocayne J.D."/>
            <person name="Scott J.D."/>
            <person name="Shirley R."/>
            <person name="Liu L.-I."/>
            <person name="Glodek A."/>
            <person name="Kelley J.M."/>
            <person name="Weidman J.F."/>
            <person name="Phillips C.A."/>
            <person name="Spriggs T."/>
            <person name="Hedblom E."/>
            <person name="Cotton M.D."/>
            <person name="Utterback T.R."/>
            <person name="Hanna M.C."/>
            <person name="Nguyen D.T."/>
            <person name="Saudek D.M."/>
            <person name="Brandon R.C."/>
            <person name="Fine L.D."/>
            <person name="Fritchman J.L."/>
            <person name="Fuhrmann J.L."/>
            <person name="Geoghagen N.S.M."/>
            <person name="Gnehm C.L."/>
            <person name="McDonald L.A."/>
            <person name="Small K.V."/>
            <person name="Fraser C.M."/>
            <person name="Smith H.O."/>
            <person name="Venter J.C."/>
        </authorList>
    </citation>
    <scope>NUCLEOTIDE SEQUENCE [LARGE SCALE GENOMIC DNA]</scope>
    <source>
        <strain>ATCC 51907 / DSM 11121 / KW20 / Rd</strain>
    </source>
</reference>
<name>Y1218_HAEIN</name>
<dbReference type="EMBL" id="L42023">
    <property type="protein sequence ID" value="AAC22871.1"/>
    <property type="molecule type" value="Genomic_DNA"/>
</dbReference>
<dbReference type="PIR" id="H64110">
    <property type="entry name" value="H64110"/>
</dbReference>
<dbReference type="RefSeq" id="NP_439374.1">
    <property type="nucleotide sequence ID" value="NC_000907.1"/>
</dbReference>
<dbReference type="STRING" id="71421.HI_1218"/>
<dbReference type="TCDB" id="2.A.14.2.1">
    <property type="family name" value="the lactate permease (lctp) family"/>
</dbReference>
<dbReference type="EnsemblBacteria" id="AAC22871">
    <property type="protein sequence ID" value="AAC22871"/>
    <property type="gene ID" value="HI_1218"/>
</dbReference>
<dbReference type="KEGG" id="hin:HI_1218"/>
<dbReference type="PATRIC" id="fig|71421.8.peg.1270"/>
<dbReference type="eggNOG" id="COG1620">
    <property type="taxonomic scope" value="Bacteria"/>
</dbReference>
<dbReference type="HOGENOM" id="CLU_021628_4_1_6"/>
<dbReference type="OrthoDB" id="9761056at2"/>
<dbReference type="PhylomeDB" id="Q57251"/>
<dbReference type="BioCyc" id="HINF71421:G1GJ1-1249-MONOMER"/>
<dbReference type="Proteomes" id="UP000000579">
    <property type="component" value="Chromosome"/>
</dbReference>
<dbReference type="GO" id="GO:0005886">
    <property type="term" value="C:plasma membrane"/>
    <property type="evidence" value="ECO:0000318"/>
    <property type="project" value="GO_Central"/>
</dbReference>
<dbReference type="GO" id="GO:0015129">
    <property type="term" value="F:lactate transmembrane transporter activity"/>
    <property type="evidence" value="ECO:0007669"/>
    <property type="project" value="InterPro"/>
</dbReference>
<dbReference type="GO" id="GO:0015295">
    <property type="term" value="F:solute:proton symporter activity"/>
    <property type="evidence" value="ECO:0000318"/>
    <property type="project" value="GO_Central"/>
</dbReference>
<dbReference type="InterPro" id="IPR003804">
    <property type="entry name" value="Lactate_perm"/>
</dbReference>
<dbReference type="NCBIfam" id="TIGR00795">
    <property type="entry name" value="lctP"/>
    <property type="match status" value="1"/>
</dbReference>
<dbReference type="PANTHER" id="PTHR30003:SF0">
    <property type="entry name" value="GLYCOLATE PERMEASE GLCA-RELATED"/>
    <property type="match status" value="1"/>
</dbReference>
<dbReference type="PANTHER" id="PTHR30003">
    <property type="entry name" value="L-LACTATE PERMEASE"/>
    <property type="match status" value="1"/>
</dbReference>
<dbReference type="Pfam" id="PF02652">
    <property type="entry name" value="Lactate_perm"/>
    <property type="match status" value="1"/>
</dbReference>
<accession>Q57251</accession>
<sequence length="532" mass="56885">MLSFILSIFPIVLLIYLMVKRNALPSYVALPWVATLVMGVHLLHFNTDIVTISANVVSAIIAVQTPITVIFGAILFNRFSEISGATNIMRKWLGNINPNPVAQLMIIGWAFAFMIEGASGFGTPAAIAAPILVGLGFHPLKVAMLALIMNSVPVSFGAVGTPTWFGFGALKLSEDMILEIGSITAFIHSIAALIIPLLALRILVNWDDIRKNIVFIYISVLGCVVPYFLIAQVNYEFPSLVGGAIGLFISVWAANRNIGLAKVTNTLDNNAVSAGEVVKALFPTGLLIAFLIVTRIHQLPFKAMMNDATIWFSTTLGSLGLFEISKGLIFSLKNIFGSNVSSSYKLLYVPALIPFVITVLIAIPFFKISSSNVKQILVSSLQQSKNPFIALIGALVMVNLMLVGGEHSMVKIIGRTFAEISGSNWTIFSSFLGAIGSFFSGSNTVSNLTFGSVQLSTAETTGISVALVLALQSVGGAMGNMVCINNIVAVSSVLNISNQEGTIIKKTIIPMIIYGIIAALGALFLVPLFYNL</sequence>
<protein>
    <recommendedName>
        <fullName>Putative L-lactate permease</fullName>
    </recommendedName>
</protein>
<proteinExistence type="inferred from homology"/>